<reference key="1">
    <citation type="submission" date="2007-03" db="EMBL/GenBank/DDBJ databases">
        <title>Complete sequence of Prosthecochloris vibrioformis DSM 265.</title>
        <authorList>
            <consortium name="US DOE Joint Genome Institute"/>
            <person name="Copeland A."/>
            <person name="Lucas S."/>
            <person name="Lapidus A."/>
            <person name="Barry K."/>
            <person name="Detter J.C."/>
            <person name="Glavina del Rio T."/>
            <person name="Hammon N."/>
            <person name="Israni S."/>
            <person name="Pitluck S."/>
            <person name="Schmutz J."/>
            <person name="Larimer F."/>
            <person name="Land M."/>
            <person name="Hauser L."/>
            <person name="Mikhailova N."/>
            <person name="Li T."/>
            <person name="Overmann J."/>
            <person name="Schuster S.C."/>
            <person name="Bryant D.A."/>
            <person name="Richardson P."/>
        </authorList>
    </citation>
    <scope>NUCLEOTIDE SEQUENCE [LARGE SCALE GENOMIC DNA]</scope>
    <source>
        <strain>DSM 265 / 1930</strain>
    </source>
</reference>
<proteinExistence type="inferred from homology"/>
<feature type="chain" id="PRO_1000076704" description="DNA mismatch repair protein MutL">
    <location>
        <begin position="1"/>
        <end position="614"/>
    </location>
</feature>
<protein>
    <recommendedName>
        <fullName evidence="1">DNA mismatch repair protein MutL</fullName>
    </recommendedName>
</protein>
<evidence type="ECO:0000255" key="1">
    <source>
        <dbReference type="HAMAP-Rule" id="MF_00149"/>
    </source>
</evidence>
<gene>
    <name evidence="1" type="primary">mutL</name>
    <name type="ordered locus">Cvib_1624</name>
</gene>
<sequence length="614" mass="69232">MAGIARLPESVANKISAGEVVQRPVSVVKELLENAIDAGADRISVIISDAGKELVRIVDNGCGMERDDALLSVERFATSKIRGVEDLEDLSSLGFRGEALASISSVSHFELRTAVEGSPLALSFRYEGGVLVEEARVQGERGTSISVRNLFYNVPARRKFLKSNATEYGHIYELVRSFVLACPEISWQMVNDGEELFNFRTPDLNERLDFFYGSGFAESLVPVTEENDYISIRGFIGRPALQKRRRLDQYFFINRRLVQNRMLSQALQQAYGELLVERQAPFALLFFEMDPSRIDVNVHPAKLEVRFEDERSVRNMFYPVIKRAVRSYDFSPDLASGELPPLSTRYPSPSPIAFQDVAEPAVTKGELYRNYREGAFSTSRPQDNLPEGFQEQLFSPPEPPAGFVGTASLAGSGGNEDEVPLGDAVAEVKIWQLHNKYLICQIKTGLMIIDQHVAHERVLYERAVDVMETSVPNSQQLLFPQKVELRPWDWEIFEEIRDDLYRLGFNLSLFGSRTVMIEGVPQDVRPGSEVSILQDMIAEYSENASKLKLEKRDNLAKSYSCRNAIMTGQKLSLQEMRSLIDSLFATRDPYCCPHGRPVIIKMTLGQLDHMFGRK</sequence>
<organism>
    <name type="scientific">Chlorobium phaeovibrioides (strain DSM 265 / 1930)</name>
    <name type="common">Prosthecochloris vibrioformis (strain DSM 265)</name>
    <dbReference type="NCBI Taxonomy" id="290318"/>
    <lineage>
        <taxon>Bacteria</taxon>
        <taxon>Pseudomonadati</taxon>
        <taxon>Chlorobiota</taxon>
        <taxon>Chlorobiia</taxon>
        <taxon>Chlorobiales</taxon>
        <taxon>Chlorobiaceae</taxon>
        <taxon>Chlorobium/Pelodictyon group</taxon>
        <taxon>Chlorobium</taxon>
    </lineage>
</organism>
<keyword id="KW-0227">DNA damage</keyword>
<keyword id="KW-0234">DNA repair</keyword>
<dbReference type="EMBL" id="CP000607">
    <property type="protein sequence ID" value="ABP37634.1"/>
    <property type="molecule type" value="Genomic_DNA"/>
</dbReference>
<dbReference type="SMR" id="A4SGM5"/>
<dbReference type="STRING" id="290318.Cvib_1624"/>
<dbReference type="KEGG" id="pvi:Cvib_1624"/>
<dbReference type="eggNOG" id="COG0323">
    <property type="taxonomic scope" value="Bacteria"/>
</dbReference>
<dbReference type="HOGENOM" id="CLU_004131_4_2_10"/>
<dbReference type="OrthoDB" id="9763467at2"/>
<dbReference type="GO" id="GO:0032300">
    <property type="term" value="C:mismatch repair complex"/>
    <property type="evidence" value="ECO:0007669"/>
    <property type="project" value="InterPro"/>
</dbReference>
<dbReference type="GO" id="GO:0005524">
    <property type="term" value="F:ATP binding"/>
    <property type="evidence" value="ECO:0007669"/>
    <property type="project" value="InterPro"/>
</dbReference>
<dbReference type="GO" id="GO:0016887">
    <property type="term" value="F:ATP hydrolysis activity"/>
    <property type="evidence" value="ECO:0007669"/>
    <property type="project" value="InterPro"/>
</dbReference>
<dbReference type="GO" id="GO:0140664">
    <property type="term" value="F:ATP-dependent DNA damage sensor activity"/>
    <property type="evidence" value="ECO:0007669"/>
    <property type="project" value="InterPro"/>
</dbReference>
<dbReference type="GO" id="GO:0030983">
    <property type="term" value="F:mismatched DNA binding"/>
    <property type="evidence" value="ECO:0007669"/>
    <property type="project" value="InterPro"/>
</dbReference>
<dbReference type="GO" id="GO:0006298">
    <property type="term" value="P:mismatch repair"/>
    <property type="evidence" value="ECO:0007669"/>
    <property type="project" value="UniProtKB-UniRule"/>
</dbReference>
<dbReference type="CDD" id="cd16926">
    <property type="entry name" value="HATPase_MutL-MLH-PMS-like"/>
    <property type="match status" value="1"/>
</dbReference>
<dbReference type="CDD" id="cd00782">
    <property type="entry name" value="MutL_Trans"/>
    <property type="match status" value="1"/>
</dbReference>
<dbReference type="FunFam" id="3.30.565.10:FF:000003">
    <property type="entry name" value="DNA mismatch repair endonuclease MutL"/>
    <property type="match status" value="1"/>
</dbReference>
<dbReference type="Gene3D" id="3.30.230.10">
    <property type="match status" value="1"/>
</dbReference>
<dbReference type="Gene3D" id="3.30.565.10">
    <property type="entry name" value="Histidine kinase-like ATPase, C-terminal domain"/>
    <property type="match status" value="1"/>
</dbReference>
<dbReference type="Gene3D" id="3.30.1540.20">
    <property type="entry name" value="MutL, C-terminal domain, dimerisation subdomain"/>
    <property type="match status" value="1"/>
</dbReference>
<dbReference type="Gene3D" id="3.30.1370.100">
    <property type="entry name" value="MutL, C-terminal domain, regulatory subdomain"/>
    <property type="match status" value="1"/>
</dbReference>
<dbReference type="HAMAP" id="MF_00149">
    <property type="entry name" value="DNA_mis_repair"/>
    <property type="match status" value="1"/>
</dbReference>
<dbReference type="InterPro" id="IPR014762">
    <property type="entry name" value="DNA_mismatch_repair_CS"/>
</dbReference>
<dbReference type="InterPro" id="IPR020667">
    <property type="entry name" value="DNA_mismatch_repair_MutL"/>
</dbReference>
<dbReference type="InterPro" id="IPR013507">
    <property type="entry name" value="DNA_mismatch_S5_2-like"/>
</dbReference>
<dbReference type="InterPro" id="IPR036890">
    <property type="entry name" value="HATPase_C_sf"/>
</dbReference>
<dbReference type="InterPro" id="IPR002099">
    <property type="entry name" value="MutL/Mlh/PMS"/>
</dbReference>
<dbReference type="InterPro" id="IPR038973">
    <property type="entry name" value="MutL/Mlh/Pms-like"/>
</dbReference>
<dbReference type="InterPro" id="IPR014790">
    <property type="entry name" value="MutL_C"/>
</dbReference>
<dbReference type="InterPro" id="IPR042120">
    <property type="entry name" value="MutL_C_dimsub"/>
</dbReference>
<dbReference type="InterPro" id="IPR042121">
    <property type="entry name" value="MutL_C_regsub"/>
</dbReference>
<dbReference type="InterPro" id="IPR037198">
    <property type="entry name" value="MutL_C_sf"/>
</dbReference>
<dbReference type="InterPro" id="IPR020568">
    <property type="entry name" value="Ribosomal_Su5_D2-typ_SF"/>
</dbReference>
<dbReference type="InterPro" id="IPR014721">
    <property type="entry name" value="Ribsml_uS5_D2-typ_fold_subgr"/>
</dbReference>
<dbReference type="NCBIfam" id="TIGR00585">
    <property type="entry name" value="mutl"/>
    <property type="match status" value="1"/>
</dbReference>
<dbReference type="PANTHER" id="PTHR10073">
    <property type="entry name" value="DNA MISMATCH REPAIR PROTEIN MLH, PMS, MUTL"/>
    <property type="match status" value="1"/>
</dbReference>
<dbReference type="PANTHER" id="PTHR10073:SF12">
    <property type="entry name" value="DNA MISMATCH REPAIR PROTEIN MLH1"/>
    <property type="match status" value="1"/>
</dbReference>
<dbReference type="Pfam" id="PF01119">
    <property type="entry name" value="DNA_mis_repair"/>
    <property type="match status" value="1"/>
</dbReference>
<dbReference type="Pfam" id="PF13589">
    <property type="entry name" value="HATPase_c_3"/>
    <property type="match status" value="1"/>
</dbReference>
<dbReference type="Pfam" id="PF08676">
    <property type="entry name" value="MutL_C"/>
    <property type="match status" value="1"/>
</dbReference>
<dbReference type="SMART" id="SM01340">
    <property type="entry name" value="DNA_mis_repair"/>
    <property type="match status" value="1"/>
</dbReference>
<dbReference type="SMART" id="SM00853">
    <property type="entry name" value="MutL_C"/>
    <property type="match status" value="1"/>
</dbReference>
<dbReference type="SUPFAM" id="SSF55874">
    <property type="entry name" value="ATPase domain of HSP90 chaperone/DNA topoisomerase II/histidine kinase"/>
    <property type="match status" value="1"/>
</dbReference>
<dbReference type="SUPFAM" id="SSF118116">
    <property type="entry name" value="DNA mismatch repair protein MutL"/>
    <property type="match status" value="1"/>
</dbReference>
<dbReference type="SUPFAM" id="SSF54211">
    <property type="entry name" value="Ribosomal protein S5 domain 2-like"/>
    <property type="match status" value="1"/>
</dbReference>
<dbReference type="PROSITE" id="PS00058">
    <property type="entry name" value="DNA_MISMATCH_REPAIR_1"/>
    <property type="match status" value="1"/>
</dbReference>
<comment type="function">
    <text evidence="1">This protein is involved in the repair of mismatches in DNA. It is required for dam-dependent methyl-directed DNA mismatch repair. May act as a 'molecular matchmaker', a protein that promotes the formation of a stable complex between two or more DNA-binding proteins in an ATP-dependent manner without itself being part of a final effector complex.</text>
</comment>
<comment type="similarity">
    <text evidence="1">Belongs to the DNA mismatch repair MutL/HexB family.</text>
</comment>
<accession>A4SGM5</accession>
<name>MUTL_CHLPM</name>